<comment type="function">
    <text evidence="1">Catalyzes the hydrolytic cleavage of the carbon-nitrogen bond in imidazolone-5-propanoate to yield N-formimidoyl-L-glutamate. It is the third step in the universal histidine degradation pathway.</text>
</comment>
<comment type="catalytic activity">
    <reaction evidence="1">
        <text>4-imidazolone-5-propanoate + H2O = N-formimidoyl-L-glutamate</text>
        <dbReference type="Rhea" id="RHEA:23660"/>
        <dbReference type="ChEBI" id="CHEBI:15377"/>
        <dbReference type="ChEBI" id="CHEBI:58928"/>
        <dbReference type="ChEBI" id="CHEBI:77893"/>
        <dbReference type="EC" id="3.5.2.7"/>
    </reaction>
</comment>
<comment type="cofactor">
    <cofactor evidence="1">
        <name>Zn(2+)</name>
        <dbReference type="ChEBI" id="CHEBI:29105"/>
    </cofactor>
    <cofactor evidence="1">
        <name>Fe(3+)</name>
        <dbReference type="ChEBI" id="CHEBI:29034"/>
    </cofactor>
    <text evidence="1">Binds 1 zinc or iron ion per subunit.</text>
</comment>
<comment type="pathway">
    <text evidence="1">Amino-acid degradation; L-histidine degradation into L-glutamate; N-formimidoyl-L-glutamate from L-histidine: step 3/3.</text>
</comment>
<comment type="subcellular location">
    <subcellularLocation>
        <location evidence="1">Cytoplasm</location>
    </subcellularLocation>
</comment>
<comment type="similarity">
    <text evidence="1">Belongs to the metallo-dependent hydrolases superfamily. HutI family.</text>
</comment>
<proteinExistence type="inferred from homology"/>
<accession>Q6GEA5</accession>
<keyword id="KW-0963">Cytoplasm</keyword>
<keyword id="KW-0369">Histidine metabolism</keyword>
<keyword id="KW-0378">Hydrolase</keyword>
<keyword id="KW-0408">Iron</keyword>
<keyword id="KW-0479">Metal-binding</keyword>
<keyword id="KW-0862">Zinc</keyword>
<evidence type="ECO:0000255" key="1">
    <source>
        <dbReference type="HAMAP-Rule" id="MF_00372"/>
    </source>
</evidence>
<organism>
    <name type="scientific">Staphylococcus aureus (strain MRSA252)</name>
    <dbReference type="NCBI Taxonomy" id="282458"/>
    <lineage>
        <taxon>Bacteria</taxon>
        <taxon>Bacillati</taxon>
        <taxon>Bacillota</taxon>
        <taxon>Bacilli</taxon>
        <taxon>Bacillales</taxon>
        <taxon>Staphylococcaceae</taxon>
        <taxon>Staphylococcus</taxon>
    </lineage>
</organism>
<protein>
    <recommendedName>
        <fullName evidence="1">Imidazolonepropionase</fullName>
        <ecNumber evidence="1">3.5.2.7</ecNumber>
    </recommendedName>
    <alternativeName>
        <fullName evidence="1">Imidazolone-5-propionate hydrolase</fullName>
    </alternativeName>
</protein>
<gene>
    <name evidence="1" type="primary">hutI</name>
    <name type="ordered locus">SAR2416</name>
</gene>
<sequence>MNDLIINHIAELILPRSTDKPLKGKELDELNVVKNGTVVIKDGKIVYAGTHTDDYDATETIDASGKVVSPALVDAHTHLTFGGSREHEMSLKRQGKSYLEILEMGGGILSTVNATRETSEDDLFKKAEHDLLTMIKHGVLAVESKSGYGLDRENELKQLKVSNRLAEKYDLDMKHTFLGPHAVPKEASSNEAFLEEMIALLPEVKHYADFADIFCETGVFTIEQSQHYMQKAKEAGFKVKIHADEIDPLGGLELAIDEQAISADHLVASSDKGKEKLRNSDTVAVLLPATTLYLGKEDYADARGMLDNNGAIALATDYNPGSSVTNNIQLVMAIAALKLKLSPNEVWNAVTVNAAKAIDINAGTINTGDKANLVIWDAPNHEYIPYHFGINHAEKVIKDGKVIVDNTLSFKV</sequence>
<name>HUTI_STAAR</name>
<feature type="chain" id="PRO_0000160961" description="Imidazolonepropionase">
    <location>
        <begin position="1"/>
        <end position="412"/>
    </location>
</feature>
<feature type="binding site" evidence="1">
    <location>
        <position position="76"/>
    </location>
    <ligand>
        <name>Fe(3+)</name>
        <dbReference type="ChEBI" id="CHEBI:29034"/>
    </ligand>
</feature>
<feature type="binding site" evidence="1">
    <location>
        <position position="76"/>
    </location>
    <ligand>
        <name>Zn(2+)</name>
        <dbReference type="ChEBI" id="CHEBI:29105"/>
    </ligand>
</feature>
<feature type="binding site" evidence="1">
    <location>
        <position position="78"/>
    </location>
    <ligand>
        <name>Fe(3+)</name>
        <dbReference type="ChEBI" id="CHEBI:29034"/>
    </ligand>
</feature>
<feature type="binding site" evidence="1">
    <location>
        <position position="78"/>
    </location>
    <ligand>
        <name>Zn(2+)</name>
        <dbReference type="ChEBI" id="CHEBI:29105"/>
    </ligand>
</feature>
<feature type="binding site" evidence="1">
    <location>
        <position position="85"/>
    </location>
    <ligand>
        <name>4-imidazolone-5-propanoate</name>
        <dbReference type="ChEBI" id="CHEBI:77893"/>
    </ligand>
</feature>
<feature type="binding site" evidence="1">
    <location>
        <position position="148"/>
    </location>
    <ligand>
        <name>4-imidazolone-5-propanoate</name>
        <dbReference type="ChEBI" id="CHEBI:77893"/>
    </ligand>
</feature>
<feature type="binding site" evidence="1">
    <location>
        <position position="148"/>
    </location>
    <ligand>
        <name>N-formimidoyl-L-glutamate</name>
        <dbReference type="ChEBI" id="CHEBI:58928"/>
    </ligand>
</feature>
<feature type="binding site" evidence="1">
    <location>
        <position position="181"/>
    </location>
    <ligand>
        <name>4-imidazolone-5-propanoate</name>
        <dbReference type="ChEBI" id="CHEBI:77893"/>
    </ligand>
</feature>
<feature type="binding site" evidence="1">
    <location>
        <position position="242"/>
    </location>
    <ligand>
        <name>Fe(3+)</name>
        <dbReference type="ChEBI" id="CHEBI:29034"/>
    </ligand>
</feature>
<feature type="binding site" evidence="1">
    <location>
        <position position="242"/>
    </location>
    <ligand>
        <name>Zn(2+)</name>
        <dbReference type="ChEBI" id="CHEBI:29105"/>
    </ligand>
</feature>
<feature type="binding site" evidence="1">
    <location>
        <position position="245"/>
    </location>
    <ligand>
        <name>4-imidazolone-5-propanoate</name>
        <dbReference type="ChEBI" id="CHEBI:77893"/>
    </ligand>
</feature>
<feature type="binding site" evidence="1">
    <location>
        <position position="317"/>
    </location>
    <ligand>
        <name>Fe(3+)</name>
        <dbReference type="ChEBI" id="CHEBI:29034"/>
    </ligand>
</feature>
<feature type="binding site" evidence="1">
    <location>
        <position position="317"/>
    </location>
    <ligand>
        <name>Zn(2+)</name>
        <dbReference type="ChEBI" id="CHEBI:29105"/>
    </ligand>
</feature>
<feature type="binding site" evidence="1">
    <location>
        <position position="319"/>
    </location>
    <ligand>
        <name>N-formimidoyl-L-glutamate</name>
        <dbReference type="ChEBI" id="CHEBI:58928"/>
    </ligand>
</feature>
<feature type="binding site" evidence="1">
    <location>
        <position position="321"/>
    </location>
    <ligand>
        <name>N-formimidoyl-L-glutamate</name>
        <dbReference type="ChEBI" id="CHEBI:58928"/>
    </ligand>
</feature>
<feature type="binding site" evidence="1">
    <location>
        <position position="322"/>
    </location>
    <ligand>
        <name>4-imidazolone-5-propanoate</name>
        <dbReference type="ChEBI" id="CHEBI:77893"/>
    </ligand>
</feature>
<reference key="1">
    <citation type="journal article" date="2004" name="Proc. Natl. Acad. Sci. U.S.A.">
        <title>Complete genomes of two clinical Staphylococcus aureus strains: evidence for the rapid evolution of virulence and drug resistance.</title>
        <authorList>
            <person name="Holden M.T.G."/>
            <person name="Feil E.J."/>
            <person name="Lindsay J.A."/>
            <person name="Peacock S.J."/>
            <person name="Day N.P.J."/>
            <person name="Enright M.C."/>
            <person name="Foster T.J."/>
            <person name="Moore C.E."/>
            <person name="Hurst L."/>
            <person name="Atkin R."/>
            <person name="Barron A."/>
            <person name="Bason N."/>
            <person name="Bentley S.D."/>
            <person name="Chillingworth C."/>
            <person name="Chillingworth T."/>
            <person name="Churcher C."/>
            <person name="Clark L."/>
            <person name="Corton C."/>
            <person name="Cronin A."/>
            <person name="Doggett J."/>
            <person name="Dowd L."/>
            <person name="Feltwell T."/>
            <person name="Hance Z."/>
            <person name="Harris B."/>
            <person name="Hauser H."/>
            <person name="Holroyd S."/>
            <person name="Jagels K."/>
            <person name="James K.D."/>
            <person name="Lennard N."/>
            <person name="Line A."/>
            <person name="Mayes R."/>
            <person name="Moule S."/>
            <person name="Mungall K."/>
            <person name="Ormond D."/>
            <person name="Quail M.A."/>
            <person name="Rabbinowitsch E."/>
            <person name="Rutherford K.M."/>
            <person name="Sanders M."/>
            <person name="Sharp S."/>
            <person name="Simmonds M."/>
            <person name="Stevens K."/>
            <person name="Whitehead S."/>
            <person name="Barrell B.G."/>
            <person name="Spratt B.G."/>
            <person name="Parkhill J."/>
        </authorList>
    </citation>
    <scope>NUCLEOTIDE SEQUENCE [LARGE SCALE GENOMIC DNA]</scope>
    <source>
        <strain>MRSA252</strain>
    </source>
</reference>
<dbReference type="EC" id="3.5.2.7" evidence="1"/>
<dbReference type="EMBL" id="BX571856">
    <property type="protein sequence ID" value="CAG41396.1"/>
    <property type="molecule type" value="Genomic_DNA"/>
</dbReference>
<dbReference type="RefSeq" id="WP_000998765.1">
    <property type="nucleotide sequence ID" value="NC_002952.2"/>
</dbReference>
<dbReference type="SMR" id="Q6GEA5"/>
<dbReference type="KEGG" id="sar:SAR2416"/>
<dbReference type="HOGENOM" id="CLU_041647_0_1_9"/>
<dbReference type="UniPathway" id="UPA00379">
    <property type="reaction ID" value="UER00551"/>
</dbReference>
<dbReference type="Proteomes" id="UP000000596">
    <property type="component" value="Chromosome"/>
</dbReference>
<dbReference type="GO" id="GO:0005737">
    <property type="term" value="C:cytoplasm"/>
    <property type="evidence" value="ECO:0007669"/>
    <property type="project" value="UniProtKB-SubCell"/>
</dbReference>
<dbReference type="GO" id="GO:0050480">
    <property type="term" value="F:imidazolonepropionase activity"/>
    <property type="evidence" value="ECO:0007669"/>
    <property type="project" value="UniProtKB-UniRule"/>
</dbReference>
<dbReference type="GO" id="GO:0005506">
    <property type="term" value="F:iron ion binding"/>
    <property type="evidence" value="ECO:0007669"/>
    <property type="project" value="UniProtKB-UniRule"/>
</dbReference>
<dbReference type="GO" id="GO:0008270">
    <property type="term" value="F:zinc ion binding"/>
    <property type="evidence" value="ECO:0007669"/>
    <property type="project" value="UniProtKB-UniRule"/>
</dbReference>
<dbReference type="GO" id="GO:0019556">
    <property type="term" value="P:L-histidine catabolic process to glutamate and formamide"/>
    <property type="evidence" value="ECO:0007669"/>
    <property type="project" value="UniProtKB-UniPathway"/>
</dbReference>
<dbReference type="GO" id="GO:0019557">
    <property type="term" value="P:L-histidine catabolic process to glutamate and formate"/>
    <property type="evidence" value="ECO:0007669"/>
    <property type="project" value="UniProtKB-UniPathway"/>
</dbReference>
<dbReference type="CDD" id="cd01296">
    <property type="entry name" value="Imidazolone-5PH"/>
    <property type="match status" value="1"/>
</dbReference>
<dbReference type="FunFam" id="3.20.20.140:FF:000007">
    <property type="entry name" value="Imidazolonepropionase"/>
    <property type="match status" value="1"/>
</dbReference>
<dbReference type="Gene3D" id="3.20.20.140">
    <property type="entry name" value="Metal-dependent hydrolases"/>
    <property type="match status" value="1"/>
</dbReference>
<dbReference type="Gene3D" id="2.30.40.10">
    <property type="entry name" value="Urease, subunit C, domain 1"/>
    <property type="match status" value="1"/>
</dbReference>
<dbReference type="HAMAP" id="MF_00372">
    <property type="entry name" value="HutI"/>
    <property type="match status" value="1"/>
</dbReference>
<dbReference type="InterPro" id="IPR006680">
    <property type="entry name" value="Amidohydro-rel"/>
</dbReference>
<dbReference type="InterPro" id="IPR005920">
    <property type="entry name" value="HutI"/>
</dbReference>
<dbReference type="InterPro" id="IPR011059">
    <property type="entry name" value="Metal-dep_hydrolase_composite"/>
</dbReference>
<dbReference type="InterPro" id="IPR032466">
    <property type="entry name" value="Metal_Hydrolase"/>
</dbReference>
<dbReference type="NCBIfam" id="TIGR01224">
    <property type="entry name" value="hutI"/>
    <property type="match status" value="1"/>
</dbReference>
<dbReference type="PANTHER" id="PTHR42752">
    <property type="entry name" value="IMIDAZOLONEPROPIONASE"/>
    <property type="match status" value="1"/>
</dbReference>
<dbReference type="PANTHER" id="PTHR42752:SF1">
    <property type="entry name" value="IMIDAZOLONEPROPIONASE-RELATED"/>
    <property type="match status" value="1"/>
</dbReference>
<dbReference type="Pfam" id="PF01979">
    <property type="entry name" value="Amidohydro_1"/>
    <property type="match status" value="1"/>
</dbReference>
<dbReference type="SUPFAM" id="SSF51338">
    <property type="entry name" value="Composite domain of metallo-dependent hydrolases"/>
    <property type="match status" value="1"/>
</dbReference>
<dbReference type="SUPFAM" id="SSF51556">
    <property type="entry name" value="Metallo-dependent hydrolases"/>
    <property type="match status" value="1"/>
</dbReference>